<protein>
    <recommendedName>
        <fullName>Elongator complex protein 5</fullName>
    </recommendedName>
    <alternativeName>
        <fullName>Dermal papilla-derived protein 6 homolog</fullName>
    </alternativeName>
    <alternativeName>
        <fullName>Retinoic acid-induced protein 12</fullName>
    </alternativeName>
</protein>
<gene>
    <name type="primary">Elp5</name>
    <name type="synonym">Derp6</name>
    <name type="synonym">Rai12</name>
</gene>
<dbReference type="EMBL" id="AY623900">
    <property type="protein sequence ID" value="AAT40590.1"/>
    <property type="molecule type" value="mRNA"/>
</dbReference>
<dbReference type="RefSeq" id="NP_001001718.1">
    <property type="nucleotide sequence ID" value="NM_001001718.1"/>
</dbReference>
<dbReference type="SMR" id="Q6IUP3"/>
<dbReference type="BioGRID" id="252166">
    <property type="interactions" value="1"/>
</dbReference>
<dbReference type="FunCoup" id="Q6IUP3">
    <property type="interactions" value="1882"/>
</dbReference>
<dbReference type="STRING" id="10116.ENSRNOP00000035345"/>
<dbReference type="PhosphoSitePlus" id="Q6IUP3"/>
<dbReference type="PaxDb" id="10116-ENSRNOP00000035345"/>
<dbReference type="PeptideAtlas" id="Q6IUP3"/>
<dbReference type="GeneID" id="287446"/>
<dbReference type="KEGG" id="rno:287446"/>
<dbReference type="UCSC" id="RGD:1303303">
    <property type="organism name" value="rat"/>
</dbReference>
<dbReference type="AGR" id="RGD:1303303"/>
<dbReference type="CTD" id="23587"/>
<dbReference type="RGD" id="1303303">
    <property type="gene designation" value="Elp5"/>
</dbReference>
<dbReference type="eggNOG" id="ENOG502QQ2R">
    <property type="taxonomic scope" value="Eukaryota"/>
</dbReference>
<dbReference type="HOGENOM" id="CLU_076374_0_0_1"/>
<dbReference type="InParanoid" id="Q6IUP3"/>
<dbReference type="OrthoDB" id="166907at2759"/>
<dbReference type="UniPathway" id="UPA00988"/>
<dbReference type="PRO" id="PR:Q6IUP3"/>
<dbReference type="Proteomes" id="UP000002494">
    <property type="component" value="Unplaced"/>
</dbReference>
<dbReference type="GO" id="GO:0005737">
    <property type="term" value="C:cytoplasm"/>
    <property type="evidence" value="ECO:0000250"/>
    <property type="project" value="UniProtKB"/>
</dbReference>
<dbReference type="GO" id="GO:0005829">
    <property type="term" value="C:cytosol"/>
    <property type="evidence" value="ECO:0000318"/>
    <property type="project" value="GO_Central"/>
</dbReference>
<dbReference type="GO" id="GO:0033588">
    <property type="term" value="C:elongator holoenzyme complex"/>
    <property type="evidence" value="ECO:0000250"/>
    <property type="project" value="UniProtKB"/>
</dbReference>
<dbReference type="GO" id="GO:0005634">
    <property type="term" value="C:nucleus"/>
    <property type="evidence" value="ECO:0000250"/>
    <property type="project" value="UniProtKB"/>
</dbReference>
<dbReference type="GO" id="GO:0030335">
    <property type="term" value="P:positive regulation of cell migration"/>
    <property type="evidence" value="ECO:0000250"/>
    <property type="project" value="UniProtKB"/>
</dbReference>
<dbReference type="GO" id="GO:0006400">
    <property type="term" value="P:tRNA modification"/>
    <property type="evidence" value="ECO:0000318"/>
    <property type="project" value="GO_Central"/>
</dbReference>
<dbReference type="GO" id="GO:0002098">
    <property type="term" value="P:tRNA wobble uridine modification"/>
    <property type="evidence" value="ECO:0007669"/>
    <property type="project" value="InterPro"/>
</dbReference>
<dbReference type="CDD" id="cd19496">
    <property type="entry name" value="Elp5"/>
    <property type="match status" value="1"/>
</dbReference>
<dbReference type="InterPro" id="IPR019519">
    <property type="entry name" value="Elp5"/>
</dbReference>
<dbReference type="PANTHER" id="PTHR15641">
    <property type="entry name" value="ELONGATOR COMPLEX PROTEIN 5"/>
    <property type="match status" value="1"/>
</dbReference>
<dbReference type="PANTHER" id="PTHR15641:SF1">
    <property type="entry name" value="ELONGATOR COMPLEX PROTEIN 5"/>
    <property type="match status" value="1"/>
</dbReference>
<dbReference type="Pfam" id="PF10483">
    <property type="entry name" value="Elong_Iki1"/>
    <property type="match status" value="2"/>
</dbReference>
<accession>Q6IUP3</accession>
<organism>
    <name type="scientific">Rattus norvegicus</name>
    <name type="common">Rat</name>
    <dbReference type="NCBI Taxonomy" id="10116"/>
    <lineage>
        <taxon>Eukaryota</taxon>
        <taxon>Metazoa</taxon>
        <taxon>Chordata</taxon>
        <taxon>Craniata</taxon>
        <taxon>Vertebrata</taxon>
        <taxon>Euteleostomi</taxon>
        <taxon>Mammalia</taxon>
        <taxon>Eutheria</taxon>
        <taxon>Euarchontoglires</taxon>
        <taxon>Glires</taxon>
        <taxon>Rodentia</taxon>
        <taxon>Myomorpha</taxon>
        <taxon>Muroidea</taxon>
        <taxon>Muridae</taxon>
        <taxon>Murinae</taxon>
        <taxon>Rattus</taxon>
    </lineage>
</organism>
<feature type="chain" id="PRO_0000280819" description="Elongator complex protein 5">
    <location>
        <begin position="1"/>
        <end position="318"/>
    </location>
</feature>
<feature type="modified residue" description="Phosphoserine" evidence="1">
    <location>
        <position position="270"/>
    </location>
</feature>
<comment type="function">
    <text evidence="1 2">Component of the elongator complex which is required for multiple tRNA modifications, including mcm5U (5-methoxycarbonylmethyl uridine), mcm5s2U (5-methoxycarbonylmethyl-2-thiouridine), and ncm5U (5-carbamoylmethyl uridine) (By similarity). The elongator complex catalyzes the formation of carboxymethyluridine in the wobble base at position 34 in tRNAs (By similarity). Involved in cell migration (By similarity).</text>
</comment>
<comment type="pathway">
    <text evidence="1">tRNA modification; 5-methoxycarbonylmethyl-2-thiouridine-tRNA biosynthesis.</text>
</comment>
<comment type="subunit">
    <text evidence="1">Component of the elongator complex which consists of ELP1, ELP2, ELP3, ELP4, ELP5 and ELP6; in the complex, is required for optimal binding of ELP3 to ELP4.</text>
</comment>
<comment type="subcellular location">
    <subcellularLocation>
        <location evidence="1">Nucleus</location>
    </subcellularLocation>
    <subcellularLocation>
        <location evidence="1">Cytoplasm</location>
    </subcellularLocation>
</comment>
<comment type="PTM">
    <text evidence="1">Tyrosine-phosphorylated.</text>
</comment>
<comment type="similarity">
    <text evidence="3">Belongs to the ELP5 family.</text>
</comment>
<comment type="caution">
    <text evidence="1">The elongator complex was originally thought to play a role in transcription elongation. However, it is no longer thought to play a direct role in this process and its primary function is thought to be in tRNA modification.</text>
</comment>
<comment type="caution">
    <text evidence="3">It is uncertain whether Met-1 or Met-19 is the initiator.</text>
</comment>
<proteinExistence type="evidence at transcript level"/>
<name>ELP5_RAT</name>
<sequence>MPRLLSGDDIRRRPEASEMLDSLLATGGLVLLRDSVEWEGRGLLKALIKKSALRGEQVHVLGCEVSEEEFREGLGSDVNSRLVYHDLFRDPLNWSQPGEAAPEGPLKALRSMCRRTDRGSVTIALDSLSWLLCHIPCVTLCQALHALSQRNVDPGDNPLIEQVRVLGLLHEELHGPGPVGAVSSLAHTEVTLSGKMDQTSASILCRRPQQRATYQTWWFSILPDFSLDLHEGLPLHSELHRDPHTTQVDPASHLTFNLHLSKKEREAKDSLTLPFQFSSEKQQALLHPVPGQTTGRIFYEPDAFDDVDQEDPDDDLDI</sequence>
<evidence type="ECO:0000250" key="1">
    <source>
        <dbReference type="UniProtKB" id="Q8TE02"/>
    </source>
</evidence>
<evidence type="ECO:0000250" key="2">
    <source>
        <dbReference type="UniProtKB" id="Q99L85"/>
    </source>
</evidence>
<evidence type="ECO:0000305" key="3"/>
<keyword id="KW-0963">Cytoplasm</keyword>
<keyword id="KW-0539">Nucleus</keyword>
<keyword id="KW-0597">Phosphoprotein</keyword>
<keyword id="KW-1185">Reference proteome</keyword>
<keyword id="KW-0819">tRNA processing</keyword>
<reference key="1">
    <citation type="submission" date="2004-05" db="EMBL/GenBank/DDBJ databases">
        <title>Cloning and characterization of a novel rat DERP6 gene.</title>
        <authorList>
            <person name="Yuan J."/>
            <person name="Shan Y.X."/>
        </authorList>
    </citation>
    <scope>NUCLEOTIDE SEQUENCE [MRNA]</scope>
</reference>